<name>ARLY_ACTP2</name>
<proteinExistence type="inferred from homology"/>
<reference key="1">
    <citation type="journal article" date="2008" name="J. Bacteriol.">
        <title>The complete genome sequence of Actinobacillus pleuropneumoniae L20 (serotype 5b).</title>
        <authorList>
            <person name="Foote S.J."/>
            <person name="Bosse J.T."/>
            <person name="Bouevitch A.B."/>
            <person name="Langford P.R."/>
            <person name="Young N.M."/>
            <person name="Nash J.H.E."/>
        </authorList>
    </citation>
    <scope>NUCLEOTIDE SEQUENCE [LARGE SCALE GENOMIC DNA]</scope>
    <source>
        <strain>L20</strain>
    </source>
</reference>
<sequence length="458" mass="51036">MALWGGRFKQEADAKFKFFNDSLRFDYRLALQDIDGSIGWAKAITSVGILTEQEHQQLVVALKELRAEIESNIAIILRDDAEDIHSWVESKLIEKVGDLGKKLHTGRSRNDQVAVDMKMWCKVQAVVLQERIRNLQHKLVETAEANQNAVMPGYTHLQRAQPITFAHWCMAYYEMLERDFSRLTDAYKRMHTCPLGSGALAGTAYSIDRDALAQDLGFAIGTRNSLDSVSDRDHVLELLSTASISMVHLSRFAEDLIFFNSGESAFLELSDRVTSGSSLMPQKKNPDACELIRGKSGRVFGALSGLLTTLKGLPLAYNKDMQEDKEGIFDAMETWQACLEIGALVLEDINVNVERTREAAQQGYSNATELADYLVAKGIPFREAHHIVGEAVVYAISKREPLEALSVAEFKQFHPVIDEDVYPILSLESCLEKRSAKGGVNPERVREAIEAAKVNLGA</sequence>
<feature type="chain" id="PRO_1000000447" description="Argininosuccinate lyase">
    <location>
        <begin position="1"/>
        <end position="458"/>
    </location>
</feature>
<dbReference type="EC" id="4.3.2.1" evidence="1"/>
<dbReference type="EMBL" id="CP000569">
    <property type="protein sequence ID" value="ABN74267.1"/>
    <property type="molecule type" value="Genomic_DNA"/>
</dbReference>
<dbReference type="RefSeq" id="WP_009874782.1">
    <property type="nucleotide sequence ID" value="NC_009053.1"/>
</dbReference>
<dbReference type="SMR" id="A3N1I1"/>
<dbReference type="STRING" id="416269.APL_1179"/>
<dbReference type="EnsemblBacteria" id="ABN74267">
    <property type="protein sequence ID" value="ABN74267"/>
    <property type="gene ID" value="APL_1179"/>
</dbReference>
<dbReference type="KEGG" id="apl:APL_1179"/>
<dbReference type="PATRIC" id="fig|416269.6.peg.1231"/>
<dbReference type="eggNOG" id="COG0165">
    <property type="taxonomic scope" value="Bacteria"/>
</dbReference>
<dbReference type="HOGENOM" id="CLU_027272_2_3_6"/>
<dbReference type="UniPathway" id="UPA00068">
    <property type="reaction ID" value="UER00114"/>
</dbReference>
<dbReference type="Proteomes" id="UP000001432">
    <property type="component" value="Chromosome"/>
</dbReference>
<dbReference type="GO" id="GO:0005829">
    <property type="term" value="C:cytosol"/>
    <property type="evidence" value="ECO:0007669"/>
    <property type="project" value="TreeGrafter"/>
</dbReference>
<dbReference type="GO" id="GO:0004056">
    <property type="term" value="F:argininosuccinate lyase activity"/>
    <property type="evidence" value="ECO:0007669"/>
    <property type="project" value="UniProtKB-UniRule"/>
</dbReference>
<dbReference type="GO" id="GO:0042450">
    <property type="term" value="P:arginine biosynthetic process via ornithine"/>
    <property type="evidence" value="ECO:0007669"/>
    <property type="project" value="InterPro"/>
</dbReference>
<dbReference type="GO" id="GO:0006526">
    <property type="term" value="P:L-arginine biosynthetic process"/>
    <property type="evidence" value="ECO:0007669"/>
    <property type="project" value="UniProtKB-UniRule"/>
</dbReference>
<dbReference type="CDD" id="cd01359">
    <property type="entry name" value="Argininosuccinate_lyase"/>
    <property type="match status" value="1"/>
</dbReference>
<dbReference type="FunFam" id="1.10.40.30:FF:000001">
    <property type="entry name" value="Argininosuccinate lyase"/>
    <property type="match status" value="1"/>
</dbReference>
<dbReference type="FunFam" id="1.20.200.10:FF:000006">
    <property type="entry name" value="Argininosuccinate lyase"/>
    <property type="match status" value="1"/>
</dbReference>
<dbReference type="Gene3D" id="1.10.40.30">
    <property type="entry name" value="Fumarase/aspartase (C-terminal domain)"/>
    <property type="match status" value="1"/>
</dbReference>
<dbReference type="Gene3D" id="1.20.200.10">
    <property type="entry name" value="Fumarase/aspartase (Central domain)"/>
    <property type="match status" value="1"/>
</dbReference>
<dbReference type="Gene3D" id="1.10.275.10">
    <property type="entry name" value="Fumarase/aspartase (N-terminal domain)"/>
    <property type="match status" value="1"/>
</dbReference>
<dbReference type="HAMAP" id="MF_00006">
    <property type="entry name" value="Arg_succ_lyase"/>
    <property type="match status" value="1"/>
</dbReference>
<dbReference type="InterPro" id="IPR029419">
    <property type="entry name" value="Arg_succ_lyase_C"/>
</dbReference>
<dbReference type="InterPro" id="IPR009049">
    <property type="entry name" value="Argininosuccinate_lyase"/>
</dbReference>
<dbReference type="InterPro" id="IPR024083">
    <property type="entry name" value="Fumarase/histidase_N"/>
</dbReference>
<dbReference type="InterPro" id="IPR020557">
    <property type="entry name" value="Fumarate_lyase_CS"/>
</dbReference>
<dbReference type="InterPro" id="IPR000362">
    <property type="entry name" value="Fumarate_lyase_fam"/>
</dbReference>
<dbReference type="InterPro" id="IPR022761">
    <property type="entry name" value="Fumarate_lyase_N"/>
</dbReference>
<dbReference type="InterPro" id="IPR008948">
    <property type="entry name" value="L-Aspartase-like"/>
</dbReference>
<dbReference type="NCBIfam" id="TIGR00838">
    <property type="entry name" value="argH"/>
    <property type="match status" value="1"/>
</dbReference>
<dbReference type="NCBIfam" id="NF008964">
    <property type="entry name" value="PRK12308.1"/>
    <property type="match status" value="1"/>
</dbReference>
<dbReference type="PANTHER" id="PTHR43814">
    <property type="entry name" value="ARGININOSUCCINATE LYASE"/>
    <property type="match status" value="1"/>
</dbReference>
<dbReference type="PANTHER" id="PTHR43814:SF1">
    <property type="entry name" value="ARGININOSUCCINATE LYASE"/>
    <property type="match status" value="1"/>
</dbReference>
<dbReference type="Pfam" id="PF14698">
    <property type="entry name" value="ASL_C2"/>
    <property type="match status" value="1"/>
</dbReference>
<dbReference type="Pfam" id="PF00206">
    <property type="entry name" value="Lyase_1"/>
    <property type="match status" value="1"/>
</dbReference>
<dbReference type="PRINTS" id="PR00145">
    <property type="entry name" value="ARGSUCLYASE"/>
</dbReference>
<dbReference type="PRINTS" id="PR00149">
    <property type="entry name" value="FUMRATELYASE"/>
</dbReference>
<dbReference type="SUPFAM" id="SSF48557">
    <property type="entry name" value="L-aspartase-like"/>
    <property type="match status" value="1"/>
</dbReference>
<dbReference type="PROSITE" id="PS00163">
    <property type="entry name" value="FUMARATE_LYASES"/>
    <property type="match status" value="1"/>
</dbReference>
<protein>
    <recommendedName>
        <fullName evidence="1">Argininosuccinate lyase</fullName>
        <shortName evidence="1">ASAL</shortName>
        <ecNumber evidence="1">4.3.2.1</ecNumber>
    </recommendedName>
    <alternativeName>
        <fullName evidence="1">Arginosuccinase</fullName>
    </alternativeName>
</protein>
<accession>A3N1I1</accession>
<comment type="catalytic activity">
    <reaction evidence="1">
        <text>2-(N(omega)-L-arginino)succinate = fumarate + L-arginine</text>
        <dbReference type="Rhea" id="RHEA:24020"/>
        <dbReference type="ChEBI" id="CHEBI:29806"/>
        <dbReference type="ChEBI" id="CHEBI:32682"/>
        <dbReference type="ChEBI" id="CHEBI:57472"/>
        <dbReference type="EC" id="4.3.2.1"/>
    </reaction>
</comment>
<comment type="pathway">
    <text evidence="1">Amino-acid biosynthesis; L-arginine biosynthesis; L-arginine from L-ornithine and carbamoyl phosphate: step 3/3.</text>
</comment>
<comment type="subcellular location">
    <subcellularLocation>
        <location evidence="1">Cytoplasm</location>
    </subcellularLocation>
</comment>
<comment type="similarity">
    <text evidence="1">Belongs to the lyase 1 family. Argininosuccinate lyase subfamily.</text>
</comment>
<organism>
    <name type="scientific">Actinobacillus pleuropneumoniae serotype 5b (strain L20)</name>
    <dbReference type="NCBI Taxonomy" id="416269"/>
    <lineage>
        <taxon>Bacteria</taxon>
        <taxon>Pseudomonadati</taxon>
        <taxon>Pseudomonadota</taxon>
        <taxon>Gammaproteobacteria</taxon>
        <taxon>Pasteurellales</taxon>
        <taxon>Pasteurellaceae</taxon>
        <taxon>Actinobacillus</taxon>
    </lineage>
</organism>
<evidence type="ECO:0000255" key="1">
    <source>
        <dbReference type="HAMAP-Rule" id="MF_00006"/>
    </source>
</evidence>
<keyword id="KW-0028">Amino-acid biosynthesis</keyword>
<keyword id="KW-0055">Arginine biosynthesis</keyword>
<keyword id="KW-0963">Cytoplasm</keyword>
<keyword id="KW-0456">Lyase</keyword>
<keyword id="KW-1185">Reference proteome</keyword>
<gene>
    <name evidence="1" type="primary">argH</name>
    <name type="ordered locus">APL_1179</name>
</gene>